<name>PIN4_ARATH</name>
<protein>
    <recommendedName>
        <fullName evidence="13">Auxin efflux carrier component 4</fullName>
        <shortName evidence="13">AtPIN4</shortName>
    </recommendedName>
</protein>
<reference key="1">
    <citation type="journal article" date="2002" name="Cell">
        <title>AtPIN4 mediates sink-driven auxin gradients and root patterning in Arabidopsis.</title>
        <authorList>
            <person name="Friml J."/>
            <person name="Benkova E."/>
            <person name="Blilou I."/>
            <person name="Wisniewska J."/>
            <person name="Hamann T."/>
            <person name="Ljung K."/>
            <person name="Woody S."/>
            <person name="Sandberg G."/>
            <person name="Scheres B."/>
            <person name="Juergens G."/>
            <person name="Palme K."/>
        </authorList>
    </citation>
    <scope>NUCLEOTIDE SEQUENCE [MRNA] (ISOFORM 2)</scope>
    <scope>CHARACTERIZATION</scope>
    <scope>DISRUPTION PHENOTYPE</scope>
    <source>
        <strain>cv. Columbia</strain>
    </source>
</reference>
<reference key="2">
    <citation type="journal article" date="1999" name="Nature">
        <title>Sequence and analysis of chromosome 2 of the plant Arabidopsis thaliana.</title>
        <authorList>
            <person name="Lin X."/>
            <person name="Kaul S."/>
            <person name="Rounsley S.D."/>
            <person name="Shea T.P."/>
            <person name="Benito M.-I."/>
            <person name="Town C.D."/>
            <person name="Fujii C.Y."/>
            <person name="Mason T.M."/>
            <person name="Bowman C.L."/>
            <person name="Barnstead M.E."/>
            <person name="Feldblyum T.V."/>
            <person name="Buell C.R."/>
            <person name="Ketchum K.A."/>
            <person name="Lee J.J."/>
            <person name="Ronning C.M."/>
            <person name="Koo H.L."/>
            <person name="Moffat K.S."/>
            <person name="Cronin L.A."/>
            <person name="Shen M."/>
            <person name="Pai G."/>
            <person name="Van Aken S."/>
            <person name="Umayam L."/>
            <person name="Tallon L.J."/>
            <person name="Gill J.E."/>
            <person name="Adams M.D."/>
            <person name="Carrera A.J."/>
            <person name="Creasy T.H."/>
            <person name="Goodman H.M."/>
            <person name="Somerville C.R."/>
            <person name="Copenhaver G.P."/>
            <person name="Preuss D."/>
            <person name="Nierman W.C."/>
            <person name="White O."/>
            <person name="Eisen J.A."/>
            <person name="Salzberg S.L."/>
            <person name="Fraser C.M."/>
            <person name="Venter J.C."/>
        </authorList>
    </citation>
    <scope>NUCLEOTIDE SEQUENCE [LARGE SCALE GENOMIC DNA]</scope>
    <source>
        <strain>cv. Columbia</strain>
    </source>
</reference>
<reference key="3">
    <citation type="journal article" date="2017" name="Plant J.">
        <title>Araport11: a complete reannotation of the Arabidopsis thaliana reference genome.</title>
        <authorList>
            <person name="Cheng C.Y."/>
            <person name="Krishnakumar V."/>
            <person name="Chan A.P."/>
            <person name="Thibaud-Nissen F."/>
            <person name="Schobel S."/>
            <person name="Town C.D."/>
        </authorList>
    </citation>
    <scope>GENOME REANNOTATION</scope>
    <source>
        <strain>cv. Columbia</strain>
    </source>
</reference>
<reference key="4">
    <citation type="journal article" date="2003" name="Science">
        <title>Empirical analysis of transcriptional activity in the Arabidopsis genome.</title>
        <authorList>
            <person name="Yamada K."/>
            <person name="Lim J."/>
            <person name="Dale J.M."/>
            <person name="Chen H."/>
            <person name="Shinn P."/>
            <person name="Palm C.J."/>
            <person name="Southwick A.M."/>
            <person name="Wu H.C."/>
            <person name="Kim C.J."/>
            <person name="Nguyen M."/>
            <person name="Pham P.K."/>
            <person name="Cheuk R.F."/>
            <person name="Karlin-Newmann G."/>
            <person name="Liu S.X."/>
            <person name="Lam B."/>
            <person name="Sakano H."/>
            <person name="Wu T."/>
            <person name="Yu G."/>
            <person name="Miranda M."/>
            <person name="Quach H.L."/>
            <person name="Tripp M."/>
            <person name="Chang C.H."/>
            <person name="Lee J.M."/>
            <person name="Toriumi M.J."/>
            <person name="Chan M.M."/>
            <person name="Tang C.C."/>
            <person name="Onodera C.S."/>
            <person name="Deng J.M."/>
            <person name="Akiyama K."/>
            <person name="Ansari Y."/>
            <person name="Arakawa T."/>
            <person name="Banh J."/>
            <person name="Banno F."/>
            <person name="Bowser L."/>
            <person name="Brooks S.Y."/>
            <person name="Carninci P."/>
            <person name="Chao Q."/>
            <person name="Choy N."/>
            <person name="Enju A."/>
            <person name="Goldsmith A.D."/>
            <person name="Gurjal M."/>
            <person name="Hansen N.F."/>
            <person name="Hayashizaki Y."/>
            <person name="Johnson-Hopson C."/>
            <person name="Hsuan V.W."/>
            <person name="Iida K."/>
            <person name="Karnes M."/>
            <person name="Khan S."/>
            <person name="Koesema E."/>
            <person name="Ishida J."/>
            <person name="Jiang P.X."/>
            <person name="Jones T."/>
            <person name="Kawai J."/>
            <person name="Kamiya A."/>
            <person name="Meyers C."/>
            <person name="Nakajima M."/>
            <person name="Narusaka M."/>
            <person name="Seki M."/>
            <person name="Sakurai T."/>
            <person name="Satou M."/>
            <person name="Tamse R."/>
            <person name="Vaysberg M."/>
            <person name="Wallender E.K."/>
            <person name="Wong C."/>
            <person name="Yamamura Y."/>
            <person name="Yuan S."/>
            <person name="Shinozaki K."/>
            <person name="Davis R.W."/>
            <person name="Theologis A."/>
            <person name="Ecker J.R."/>
        </authorList>
    </citation>
    <scope>NUCLEOTIDE SEQUENCE [LARGE SCALE MRNA] (ISOFORM 1)</scope>
    <source>
        <strain>cv. Columbia</strain>
    </source>
</reference>
<reference key="5">
    <citation type="journal article" date="2003" name="Nature">
        <title>Efflux-dependent auxin gradients establish the apical-basal axis of Arabidopsis.</title>
        <authorList>
            <person name="Friml J."/>
            <person name="Vieten A."/>
            <person name="Sauer M."/>
            <person name="Weijers D."/>
            <person name="Schwarz H."/>
            <person name="Hamann T."/>
            <person name="Offringa R."/>
            <person name="Juergens G."/>
        </authorList>
    </citation>
    <scope>DEVELOPMENTAL STAGE</scope>
</reference>
<reference key="6">
    <citation type="journal article" date="2005" name="Trends Plant Sci.">
        <title>The PIN auxin efflux facilitators: evolutionary and functional perspectives.</title>
        <authorList>
            <person name="Paponov I.A."/>
            <person name="Teale W.D."/>
            <person name="Trebar M."/>
            <person name="Blilou I."/>
            <person name="Palme K."/>
        </authorList>
    </citation>
    <scope>GENE FAMILY</scope>
    <scope>NOMENCLATURE</scope>
</reference>
<reference key="7">
    <citation type="journal article" date="2009" name="Plant Physiol.">
        <title>Large-scale Arabidopsis phosphoproteome profiling reveals novel chloroplast kinase substrates and phosphorylation networks.</title>
        <authorList>
            <person name="Reiland S."/>
            <person name="Messerli G."/>
            <person name="Baerenfaller K."/>
            <person name="Gerrits B."/>
            <person name="Endler A."/>
            <person name="Grossmann J."/>
            <person name="Gruissem W."/>
            <person name="Baginsky S."/>
        </authorList>
    </citation>
    <scope>PHOSPHORYLATION [LARGE SCALE ANALYSIS] AT SER-395</scope>
    <scope>PHOSPHORYLATION [LARGE SCALE ANALYSIS] AT SER-395 (ISOFORM 2)</scope>
    <scope>IDENTIFICATION BY MASS SPECTROMETRY [LARGE SCALE ANALYSIS]</scope>
</reference>
<reference key="8">
    <citation type="journal article" date="2010" name="Plant Physiol.">
        <title>Differential auxin-transporting activities of PIN-FORMED proteins in Arabidopsis root hair cells.</title>
        <authorList>
            <person name="Ganguly A."/>
            <person name="Lee S.H."/>
            <person name="Cho M."/>
            <person name="Lee O.R."/>
            <person name="Yoo H."/>
            <person name="Cho H.T."/>
        </authorList>
    </citation>
    <scope>SUBCELLULAR LOCATION</scope>
    <scope>FUNCTION</scope>
</reference>
<reference key="9">
    <citation type="journal article" date="2012" name="Plant J.">
        <title>The endoplasmic reticulum localized PIN8 is a pollen-specific auxin carrier involved in intracellular auxin homeostasis.</title>
        <authorList>
            <person name="Dal Bosco C."/>
            <person name="Dovzhenko A."/>
            <person name="Liu X."/>
            <person name="Woerner N."/>
            <person name="Rensch T."/>
            <person name="Eismann M."/>
            <person name="Eimer S."/>
            <person name="Hegermann J."/>
            <person name="Paponov I.A."/>
            <person name="Ruperti B."/>
            <person name="Heberle-Bors E."/>
            <person name="Touraev A."/>
            <person name="Cohen J.D."/>
            <person name="Palme K."/>
        </authorList>
    </citation>
    <scope>TISSUE SPECIFICITY</scope>
</reference>
<reference key="10">
    <citation type="journal article" date="2014" name="Plant J.">
        <title>Inter-regulation of the unfolded protein response and auxin signaling.</title>
        <authorList>
            <person name="Chen Y."/>
            <person name="Aung K."/>
            <person name="Rolcik J."/>
            <person name="Walicki K."/>
            <person name="Friml J."/>
            <person name="Brandizzi F."/>
        </authorList>
    </citation>
    <scope>INDUCTION</scope>
</reference>
<reference key="11">
    <citation type="journal article" date="2019" name="Cell">
        <title>Root system depth in Arabidopsis is shaped by EXOCYST70A3 via the dynamic modulation of auxin transport.</title>
        <authorList>
            <person name="Ogura T."/>
            <person name="Goeschl C."/>
            <person name="Filiault D."/>
            <person name="Wolhrab B."/>
            <person name="Satbhai S.B."/>
            <person name="Busch W."/>
        </authorList>
    </citation>
    <scope>FUNCTION</scope>
    <scope>DISRUPTION PHENOTYPE</scope>
    <scope>SUBCELLULAR LOCATION</scope>
    <scope>TISSUE SPECIFICITY</scope>
    <source>
        <strain>cv. C24</strain>
        <strain>cv. Columbia</strain>
        <strain>cv. Cvi-0</strain>
        <strain>cv. Lac-5</strain>
        <strain>cv. Ler-1</strain>
        <strain>cv. Mib-60</strain>
        <strain>cv. Sha</strain>
        <strain>cv. Ty-0</strain>
        <strain>cv. Wassilewskija-2</strain>
    </source>
</reference>
<reference key="12">
    <citation type="journal article" date="2019" name="PLoS Genet.">
        <title>Connective auxin transport contributes to strigolactone-mediated shoot branching control independent of the transcription factor BRC1.</title>
        <authorList>
            <person name="van Rongen M."/>
            <person name="Bennett T."/>
            <person name="Ticchiarelli F."/>
            <person name="Leyser O."/>
        </authorList>
    </citation>
    <scope>FUNCTION</scope>
    <scope>DISRUPTION PHENOTYPE</scope>
    <source>
        <strain>cv. Columbia</strain>
    </source>
</reference>
<proteinExistence type="evidence at protein level"/>
<keyword id="KW-0025">Alternative splicing</keyword>
<keyword id="KW-0927">Auxin signaling pathway</keyword>
<keyword id="KW-1003">Cell membrane</keyword>
<keyword id="KW-0217">Developmental protein</keyword>
<keyword id="KW-0472">Membrane</keyword>
<keyword id="KW-0597">Phosphoprotein</keyword>
<keyword id="KW-1185">Reference proteome</keyword>
<keyword id="KW-0812">Transmembrane</keyword>
<keyword id="KW-1133">Transmembrane helix</keyword>
<keyword id="KW-0813">Transport</keyword>
<feature type="chain" id="PRO_0000123783" description="Auxin efflux carrier component 4">
    <location>
        <begin position="1"/>
        <end position="616"/>
    </location>
</feature>
<feature type="topological domain" description="Extracellular" evidence="14">
    <location>
        <begin position="1"/>
        <end position="7"/>
    </location>
</feature>
<feature type="transmembrane region" description="Helical; Name=1" evidence="4">
    <location>
        <begin position="8"/>
        <end position="28"/>
    </location>
</feature>
<feature type="topological domain" description="Cytoplasmic" evidence="14">
    <location>
        <begin position="29"/>
        <end position="38"/>
    </location>
</feature>
<feature type="transmembrane region" description="Helical; Name=2" evidence="4">
    <location>
        <begin position="39"/>
        <end position="59"/>
    </location>
</feature>
<feature type="topological domain" description="Extracellular" evidence="14">
    <location>
        <begin position="60"/>
        <end position="70"/>
    </location>
</feature>
<feature type="transmembrane region" description="Helical; Name=3" evidence="4">
    <location>
        <begin position="71"/>
        <end position="91"/>
    </location>
</feature>
<feature type="topological domain" description="Cytoplasmic" evidence="14">
    <location>
        <begin position="92"/>
        <end position="101"/>
    </location>
</feature>
<feature type="transmembrane region" description="Helical; Name=4" evidence="4">
    <location>
        <begin position="102"/>
        <end position="122"/>
    </location>
</feature>
<feature type="topological domain" description="Extracellular" evidence="14">
    <location>
        <begin position="123"/>
        <end position="131"/>
    </location>
</feature>
<feature type="transmembrane region" description="Helical; Name=5" evidence="4">
    <location>
        <begin position="132"/>
        <end position="152"/>
    </location>
</feature>
<feature type="topological domain" description="Cytoplasmic" evidence="14">
    <location>
        <begin position="153"/>
        <end position="476"/>
    </location>
</feature>
<feature type="transmembrane region" description="Helical; Name=6" evidence="4">
    <location>
        <begin position="477"/>
        <end position="497"/>
    </location>
</feature>
<feature type="topological domain" description="Extracellular" evidence="14">
    <location>
        <begin position="498"/>
        <end position="500"/>
    </location>
</feature>
<feature type="transmembrane region" description="Helical; Name=7" evidence="4">
    <location>
        <begin position="501"/>
        <end position="521"/>
    </location>
</feature>
<feature type="topological domain" description="Cytoplasmic" evidence="14">
    <location>
        <begin position="522"/>
        <end position="535"/>
    </location>
</feature>
<feature type="transmembrane region" description="Helical; Name=8" evidence="4">
    <location>
        <begin position="536"/>
        <end position="556"/>
    </location>
</feature>
<feature type="topological domain" description="Extracellular" evidence="14">
    <location>
        <begin position="557"/>
        <end position="561"/>
    </location>
</feature>
<feature type="transmembrane region" description="Helical; Name=9" evidence="4">
    <location>
        <begin position="562"/>
        <end position="582"/>
    </location>
</feature>
<feature type="topological domain" description="Cytoplasmic" evidence="14">
    <location>
        <begin position="583"/>
        <end position="595"/>
    </location>
</feature>
<feature type="transmembrane region" description="Helical; Name=10" evidence="4">
    <location>
        <begin position="596"/>
        <end position="616"/>
    </location>
</feature>
<feature type="region of interest" description="Disordered" evidence="5">
    <location>
        <begin position="302"/>
        <end position="343"/>
    </location>
</feature>
<feature type="region of interest" description="Disordered" evidence="5">
    <location>
        <begin position="390"/>
        <end position="411"/>
    </location>
</feature>
<feature type="compositionally biased region" description="Polar residues" evidence="5">
    <location>
        <begin position="312"/>
        <end position="334"/>
    </location>
</feature>
<feature type="compositionally biased region" description="Gly residues" evidence="5">
    <location>
        <begin position="398"/>
        <end position="409"/>
    </location>
</feature>
<feature type="binding site" evidence="2">
    <location>
        <position position="51"/>
    </location>
    <ligand>
        <name>(indol-3-yl)acetate</name>
        <dbReference type="ChEBI" id="CHEBI:30854"/>
    </ligand>
</feature>
<feature type="binding site" evidence="2">
    <location>
        <position position="112"/>
    </location>
    <ligand>
        <name>(indol-3-yl)acetate</name>
        <dbReference type="ChEBI" id="CHEBI:30854"/>
    </ligand>
</feature>
<feature type="binding site" evidence="2">
    <location>
        <position position="114"/>
    </location>
    <ligand>
        <name>(indol-3-yl)acetate</name>
        <dbReference type="ChEBI" id="CHEBI:30854"/>
    </ligand>
</feature>
<feature type="binding site" evidence="2">
    <location>
        <position position="145"/>
    </location>
    <ligand>
        <name>(indol-3-yl)acetate</name>
        <dbReference type="ChEBI" id="CHEBI:30854"/>
    </ligand>
</feature>
<feature type="binding site" evidence="2">
    <location>
        <position position="576"/>
    </location>
    <ligand>
        <name>(indol-3-yl)acetate</name>
        <dbReference type="ChEBI" id="CHEBI:30854"/>
    </ligand>
</feature>
<feature type="binding site" evidence="2">
    <location>
        <position position="577"/>
    </location>
    <ligand>
        <name>(indol-3-yl)acetate</name>
        <dbReference type="ChEBI" id="CHEBI:30854"/>
    </ligand>
</feature>
<feature type="modified residue" description="Phosphoserine" evidence="1">
    <location>
        <position position="223"/>
    </location>
</feature>
<feature type="modified residue" description="Phosphoserine" evidence="1">
    <location>
        <position position="240"/>
    </location>
</feature>
<feature type="modified residue" description="Phosphoserine" evidence="1">
    <location>
        <position position="280"/>
    </location>
</feature>
<feature type="modified residue" description="Phosphoserine" evidence="3">
    <location>
        <position position="358"/>
    </location>
</feature>
<feature type="modified residue" description="Phosphoserine" evidence="17">
    <location>
        <position position="395"/>
    </location>
</feature>
<feature type="splice variant" id="VSP_009419" description="In isoform 2." evidence="13">
    <location>
        <begin position="396"/>
        <end position="399"/>
    </location>
</feature>
<feature type="modified residue" description="Phosphoserine" evidence="17">
    <location sequence="Q8RWZ6-2">
        <position position="395"/>
    </location>
</feature>
<sequence length="616" mass="66742">MITWHDLYTVLTAVVPLYVAMILAYGSVQWWKIFSPDQCSGINRFVAIFAVPLLSFHFISTNDPYAMNFRFVAADTLQKIIMLVLLALWANLTKNGSLEWMITIFSLSTLPNTLVMGIPLLIAMYGTYAGSLMVQVVVLQCIIWYTLLLFLFEYRGAKLLIMEQFPETGASIVSFKVESDVVSLDGHDFLETDAEIGNDGKLHVTVRKSNASRRSLMMTPRPSNLTGAEIYSLSSTPRGSNFNHSDFYSVMGFPGGRLSNFGPADLYSVQSSRGPTPRPSNFEENNAVKYGFYNNTNSSVPAAGSYPAPNPEFSTGTGVSTKPNKIPKENQQQLQEKDSKASHDAKELHMFVWSSSASPVSDVFGGGAGDNVATEQSEQGAKEIRMVVSDQPRKSNARGGGDDIGGLDSGEGEREIEKATAGLNKMGSNSTAELEAAGGDGGGNNGTHMPPTSVMTRLILIMVWRKLIRNPNTYSSLIGLIWALVAYRWHVAMPKILQQSISILSDAGLGMAMFSLGLFMALQPKIIACGNSVATFAMAVRFITGPAIMAVAGIAIGLHGDLLRIAIVQAALPQGIVPFVFAKEYNVHPTILSTGVIFGMLIALPITLVYYILLGL</sequence>
<comment type="function">
    <text evidence="8 11 12">Acts as a component of the auxin efflux carrier. Plays a role in generating a sink for auxin into columella cells (PubMed:20439545). Maintains the endogenous auxin gradient, which is essential for correct root patterning (PubMed:20439545). Involved in EXO70A3-regulated gravitropic responses in columella cells and in root system architecture (RSA) (PubMed:31299202). Together with PIN3 and PIN7, involved in the connective auxin transport (CAT) that ensures communication across the shoot system, and modulates strigolactone-mediated shoot branching control (PubMed:30865619). The abcb19 pin3 pin4 pin7 quadruple mutant exhibits an additive phenotype on strigolactone-mediated bud outgrowth responses and shoot branching control (PubMed:30865619).</text>
</comment>
<comment type="subunit">
    <text evidence="1">Homodimer.</text>
</comment>
<comment type="subcellular location">
    <subcellularLocation>
        <location evidence="8 12">Cell membrane</location>
        <topology evidence="14">Multi-pass membrane protein</topology>
    </subcellularLocation>
    <text evidence="12">Distribution in columella cells is regulated by EXO70A3.</text>
</comment>
<comment type="alternative products">
    <event type="alternative splicing"/>
    <isoform>
        <id>Q8RWZ6-1</id>
        <name>1</name>
        <sequence type="displayed"/>
    </isoform>
    <isoform>
        <id>Q8RWZ6-2</id>
        <name>2</name>
        <sequence type="described" ref="VSP_009419"/>
    </isoform>
</comment>
<comment type="tissue specificity">
    <text evidence="9 12">Expressed in the quiescent center precursors and surrounding cells (PubMed:22540348). Present in columella cells of primary roots (PubMed:31299202). Detected in pollen (PubMed:22540348).</text>
</comment>
<comment type="developmental stage">
    <text evidence="7">Expressed during embryogenesis (PubMed:14614497). Detected in the embryonic and seedling root meristems (PubMed:14614497).</text>
</comment>
<comment type="induction">
    <text evidence="10">Down-regulated by endoplasmic reticulum stress treatment.</text>
</comment>
<comment type="disruption phenotype">
    <text evidence="6 11 12">Plants display altered patterning in the developing root meristem (PubMed:11893337). Larger variation of root tip angles during the dynamic root gravitropic response (PubMed:31299202). Deeper root system architecture (RSA) (PubMed:31299202). The triple mutant pin3 pin4 pin7 is able to suppress partially the highly branched phenotype of strigolactone deficient mutants lacking MAX2 and MAX4 (PubMed:30865619).</text>
</comment>
<comment type="miscellaneous">
    <molecule>Isoform 2</molecule>
    <text evidence="14">May be due to a competing donor splice site.</text>
</comment>
<comment type="similarity">
    <text evidence="14">Belongs to the auxin efflux carrier (TC 2.A.69.1) family.</text>
</comment>
<gene>
    <name evidence="13" type="primary">PIN4</name>
    <name evidence="15" type="ordered locus">At2g01420</name>
    <name evidence="16" type="ORF">F2I9.4</name>
</gene>
<dbReference type="EMBL" id="AF087016">
    <property type="protein sequence ID" value="AAF36769.1"/>
    <property type="molecule type" value="mRNA"/>
</dbReference>
<dbReference type="EMBL" id="AC005560">
    <property type="protein sequence ID" value="AAC67319.2"/>
    <property type="molecule type" value="Genomic_DNA"/>
</dbReference>
<dbReference type="EMBL" id="AC006200">
    <property type="protein sequence ID" value="AAM15143.1"/>
    <property type="molecule type" value="Genomic_DNA"/>
</dbReference>
<dbReference type="EMBL" id="CP002685">
    <property type="protein sequence ID" value="AEC05448.1"/>
    <property type="molecule type" value="Genomic_DNA"/>
</dbReference>
<dbReference type="EMBL" id="CP002685">
    <property type="protein sequence ID" value="AEC05449.1"/>
    <property type="molecule type" value="Genomic_DNA"/>
</dbReference>
<dbReference type="EMBL" id="AY091009">
    <property type="protein sequence ID" value="AAM14031.1"/>
    <property type="molecule type" value="mRNA"/>
</dbReference>
<dbReference type="EMBL" id="BT008691">
    <property type="protein sequence ID" value="AAP40497.1"/>
    <property type="molecule type" value="mRNA"/>
</dbReference>
<dbReference type="PIR" id="E84424">
    <property type="entry name" value="E84424"/>
</dbReference>
<dbReference type="RefSeq" id="NP_565261.1">
    <molecule id="Q8RWZ6-2"/>
    <property type="nucleotide sequence ID" value="NM_126203.3"/>
</dbReference>
<dbReference type="RefSeq" id="NP_849923.1">
    <molecule id="Q8RWZ6-1"/>
    <property type="nucleotide sequence ID" value="NM_179592.2"/>
</dbReference>
<dbReference type="SMR" id="Q8RWZ6"/>
<dbReference type="BioGRID" id="73">
    <property type="interactions" value="63"/>
</dbReference>
<dbReference type="FunCoup" id="Q8RWZ6">
    <property type="interactions" value="32"/>
</dbReference>
<dbReference type="IntAct" id="Q8RWZ6">
    <property type="interactions" value="59"/>
</dbReference>
<dbReference type="STRING" id="3702.Q8RWZ6"/>
<dbReference type="GlyCosmos" id="Q8RWZ6">
    <property type="glycosylation" value="2 sites, No reported glycans"/>
</dbReference>
<dbReference type="GlyGen" id="Q8RWZ6">
    <property type="glycosylation" value="1 site"/>
</dbReference>
<dbReference type="iPTMnet" id="Q8RWZ6"/>
<dbReference type="PaxDb" id="3702-AT2G01420.2"/>
<dbReference type="ProteomicsDB" id="235030">
    <molecule id="Q8RWZ6-1"/>
</dbReference>
<dbReference type="EnsemblPlants" id="AT2G01420.1">
    <molecule id="Q8RWZ6-2"/>
    <property type="protein sequence ID" value="AT2G01420.1"/>
    <property type="gene ID" value="AT2G01420"/>
</dbReference>
<dbReference type="EnsemblPlants" id="AT2G01420.2">
    <molecule id="Q8RWZ6-1"/>
    <property type="protein sequence ID" value="AT2G01420.2"/>
    <property type="gene ID" value="AT2G01420"/>
</dbReference>
<dbReference type="GeneID" id="814670"/>
<dbReference type="Gramene" id="AT2G01420.1">
    <molecule id="Q8RWZ6-2"/>
    <property type="protein sequence ID" value="AT2G01420.1"/>
    <property type="gene ID" value="AT2G01420"/>
</dbReference>
<dbReference type="Gramene" id="AT2G01420.2">
    <molecule id="Q8RWZ6-1"/>
    <property type="protein sequence ID" value="AT2G01420.2"/>
    <property type="gene ID" value="AT2G01420"/>
</dbReference>
<dbReference type="KEGG" id="ath:AT2G01420"/>
<dbReference type="Araport" id="AT2G01420"/>
<dbReference type="TAIR" id="AT2G01420">
    <property type="gene designation" value="PIN4"/>
</dbReference>
<dbReference type="eggNOG" id="ENOG502QRM7">
    <property type="taxonomic scope" value="Eukaryota"/>
</dbReference>
<dbReference type="InParanoid" id="Q8RWZ6"/>
<dbReference type="OMA" id="KATHMPP"/>
<dbReference type="PhylomeDB" id="Q8RWZ6"/>
<dbReference type="PRO" id="PR:Q8RWZ6"/>
<dbReference type="Proteomes" id="UP000006548">
    <property type="component" value="Chromosome 2"/>
</dbReference>
<dbReference type="ExpressionAtlas" id="Q8RWZ6">
    <property type="expression patterns" value="baseline and differential"/>
</dbReference>
<dbReference type="GO" id="GO:0071944">
    <property type="term" value="C:cell periphery"/>
    <property type="evidence" value="ECO:0000250"/>
    <property type="project" value="UniProtKB"/>
</dbReference>
<dbReference type="GO" id="GO:0005739">
    <property type="term" value="C:mitochondrion"/>
    <property type="evidence" value="ECO:0007005"/>
    <property type="project" value="TAIR"/>
</dbReference>
<dbReference type="GO" id="GO:0005886">
    <property type="term" value="C:plasma membrane"/>
    <property type="evidence" value="ECO:0000250"/>
    <property type="project" value="UniProtKB"/>
</dbReference>
<dbReference type="GO" id="GO:0010329">
    <property type="term" value="F:auxin efflux transmembrane transporter activity"/>
    <property type="evidence" value="ECO:0000250"/>
    <property type="project" value="UniProtKB"/>
</dbReference>
<dbReference type="GO" id="GO:0042802">
    <property type="term" value="F:identical protein binding"/>
    <property type="evidence" value="ECO:0000250"/>
    <property type="project" value="UniProtKB"/>
</dbReference>
<dbReference type="GO" id="GO:0042803">
    <property type="term" value="F:protein homodimerization activity"/>
    <property type="evidence" value="ECO:0000250"/>
    <property type="project" value="UniProtKB"/>
</dbReference>
<dbReference type="GO" id="GO:0010315">
    <property type="term" value="P:auxin export across the plasma membrane"/>
    <property type="evidence" value="ECO:0000250"/>
    <property type="project" value="UniProtKB"/>
</dbReference>
<dbReference type="GO" id="GO:0009926">
    <property type="term" value="P:auxin polar transport"/>
    <property type="evidence" value="ECO:0000315"/>
    <property type="project" value="TAIR"/>
</dbReference>
<dbReference type="GO" id="GO:0009734">
    <property type="term" value="P:auxin-activated signaling pathway"/>
    <property type="evidence" value="ECO:0007669"/>
    <property type="project" value="UniProtKB-KW"/>
</dbReference>
<dbReference type="GO" id="GO:0009630">
    <property type="term" value="P:gravitropism"/>
    <property type="evidence" value="ECO:0000315"/>
    <property type="project" value="UniProtKB"/>
</dbReference>
<dbReference type="GO" id="GO:0048364">
    <property type="term" value="P:root development"/>
    <property type="evidence" value="ECO:0000315"/>
    <property type="project" value="TAIR"/>
</dbReference>
<dbReference type="GO" id="GO:0010015">
    <property type="term" value="P:root morphogenesis"/>
    <property type="evidence" value="ECO:0000315"/>
    <property type="project" value="UniProtKB"/>
</dbReference>
<dbReference type="InterPro" id="IPR014024">
    <property type="entry name" value="Auxin_eff_plant"/>
</dbReference>
<dbReference type="InterPro" id="IPR051107">
    <property type="entry name" value="Auxin_Efflux_Carrier"/>
</dbReference>
<dbReference type="InterPro" id="IPR004776">
    <property type="entry name" value="Mem_transp_PIN-like"/>
</dbReference>
<dbReference type="NCBIfam" id="TIGR00946">
    <property type="entry name" value="2a69"/>
    <property type="match status" value="1"/>
</dbReference>
<dbReference type="PANTHER" id="PTHR31752">
    <property type="entry name" value="AUXIN EFFLUX CARRIER COMPONENT 1B-RELATED"/>
    <property type="match status" value="1"/>
</dbReference>
<dbReference type="PANTHER" id="PTHR31752:SF54">
    <property type="entry name" value="AUXIN EFFLUX CARRIER COMPONENT 4"/>
    <property type="match status" value="1"/>
</dbReference>
<dbReference type="Pfam" id="PF03547">
    <property type="entry name" value="Mem_trans"/>
    <property type="match status" value="1"/>
</dbReference>
<accession>Q8RWZ6</accession>
<accession>Q9M7Q6</accession>
<accession>Q9MAS3</accession>
<evidence type="ECO:0000250" key="1">
    <source>
        <dbReference type="UniProtKB" id="Q9C6B8"/>
    </source>
</evidence>
<evidence type="ECO:0000250" key="2">
    <source>
        <dbReference type="UniProtKB" id="Q9LFP6"/>
    </source>
</evidence>
<evidence type="ECO:0000250" key="3">
    <source>
        <dbReference type="UniProtKB" id="Q9S7Z8"/>
    </source>
</evidence>
<evidence type="ECO:0000255" key="4"/>
<evidence type="ECO:0000256" key="5">
    <source>
        <dbReference type="SAM" id="MobiDB-lite"/>
    </source>
</evidence>
<evidence type="ECO:0000269" key="6">
    <source>
    </source>
</evidence>
<evidence type="ECO:0000269" key="7">
    <source>
    </source>
</evidence>
<evidence type="ECO:0000269" key="8">
    <source>
    </source>
</evidence>
<evidence type="ECO:0000269" key="9">
    <source>
    </source>
</evidence>
<evidence type="ECO:0000269" key="10">
    <source>
    </source>
</evidence>
<evidence type="ECO:0000269" key="11">
    <source>
    </source>
</evidence>
<evidence type="ECO:0000269" key="12">
    <source>
    </source>
</evidence>
<evidence type="ECO:0000303" key="13">
    <source>
    </source>
</evidence>
<evidence type="ECO:0000305" key="14"/>
<evidence type="ECO:0000312" key="15">
    <source>
        <dbReference type="Araport" id="AT2G01420"/>
    </source>
</evidence>
<evidence type="ECO:0000312" key="16">
    <source>
        <dbReference type="EMBL" id="AAC67319.2"/>
    </source>
</evidence>
<evidence type="ECO:0007744" key="17">
    <source>
    </source>
</evidence>
<organism>
    <name type="scientific">Arabidopsis thaliana</name>
    <name type="common">Mouse-ear cress</name>
    <dbReference type="NCBI Taxonomy" id="3702"/>
    <lineage>
        <taxon>Eukaryota</taxon>
        <taxon>Viridiplantae</taxon>
        <taxon>Streptophyta</taxon>
        <taxon>Embryophyta</taxon>
        <taxon>Tracheophyta</taxon>
        <taxon>Spermatophyta</taxon>
        <taxon>Magnoliopsida</taxon>
        <taxon>eudicotyledons</taxon>
        <taxon>Gunneridae</taxon>
        <taxon>Pentapetalae</taxon>
        <taxon>rosids</taxon>
        <taxon>malvids</taxon>
        <taxon>Brassicales</taxon>
        <taxon>Brassicaceae</taxon>
        <taxon>Camelineae</taxon>
        <taxon>Arabidopsis</taxon>
    </lineage>
</organism>